<proteinExistence type="inferred from homology"/>
<protein>
    <recommendedName>
        <fullName>Uncharacterized acetyltransferase M6_Spy1295</fullName>
        <ecNumber>2.3.1.-</ecNumber>
    </recommendedName>
</protein>
<keyword id="KW-0012">Acyltransferase</keyword>
<keyword id="KW-0808">Transferase</keyword>
<comment type="similarity">
    <text evidence="2">Belongs to the acetyltransferase family.</text>
</comment>
<reference key="1">
    <citation type="journal article" date="2004" name="J. Infect. Dis.">
        <title>Progress toward characterization of the group A Streptococcus metagenome: complete genome sequence of a macrolide-resistant serotype M6 strain.</title>
        <authorList>
            <person name="Banks D.J."/>
            <person name="Porcella S.F."/>
            <person name="Barbian K.D."/>
            <person name="Beres S.B."/>
            <person name="Philips L.E."/>
            <person name="Voyich J.M."/>
            <person name="DeLeo F.R."/>
            <person name="Martin J.M."/>
            <person name="Somerville G.A."/>
            <person name="Musser J.M."/>
        </authorList>
    </citation>
    <scope>NUCLEOTIDE SEQUENCE [LARGE SCALE GENOMIC DNA]</scope>
    <source>
        <strain>ATCC BAA-946 / MGAS10394</strain>
    </source>
</reference>
<dbReference type="EC" id="2.3.1.-"/>
<dbReference type="EMBL" id="CP000003">
    <property type="protein sequence ID" value="AAT87430.1"/>
    <property type="molecule type" value="Genomic_DNA"/>
</dbReference>
<dbReference type="RefSeq" id="WP_011184767.1">
    <property type="nucleotide sequence ID" value="NC_006086.1"/>
</dbReference>
<dbReference type="SMR" id="Q5XAY3"/>
<dbReference type="KEGG" id="spa:M6_Spy1295"/>
<dbReference type="HOGENOM" id="CLU_056607_9_0_9"/>
<dbReference type="Proteomes" id="UP000001167">
    <property type="component" value="Chromosome"/>
</dbReference>
<dbReference type="GO" id="GO:0016747">
    <property type="term" value="F:acyltransferase activity, transferring groups other than amino-acyl groups"/>
    <property type="evidence" value="ECO:0007669"/>
    <property type="project" value="InterPro"/>
</dbReference>
<dbReference type="Gene3D" id="3.40.630.30">
    <property type="match status" value="1"/>
</dbReference>
<dbReference type="InterPro" id="IPR016181">
    <property type="entry name" value="Acyl_CoA_acyltransferase"/>
</dbReference>
<dbReference type="InterPro" id="IPR000182">
    <property type="entry name" value="GNAT_dom"/>
</dbReference>
<dbReference type="Pfam" id="PF13673">
    <property type="entry name" value="Acetyltransf_10"/>
    <property type="match status" value="1"/>
</dbReference>
<dbReference type="SUPFAM" id="SSF55729">
    <property type="entry name" value="Acyl-CoA N-acyltransferases (Nat)"/>
    <property type="match status" value="1"/>
</dbReference>
<dbReference type="PROSITE" id="PS51186">
    <property type="entry name" value="GNAT"/>
    <property type="match status" value="1"/>
</dbReference>
<evidence type="ECO:0000255" key="1">
    <source>
        <dbReference type="PROSITE-ProRule" id="PRU00532"/>
    </source>
</evidence>
<evidence type="ECO:0000305" key="2"/>
<accession>Q5XAY3</accession>
<gene>
    <name type="ordered locus">M6_Spy1295</name>
</gene>
<name>Y1295_STRP6</name>
<feature type="chain" id="PRO_0000205422" description="Uncharacterized acetyltransferase M6_Spy1295">
    <location>
        <begin position="1"/>
        <end position="146"/>
    </location>
</feature>
<feature type="domain" description="N-acetyltransferase" evidence="1">
    <location>
        <begin position="1"/>
        <end position="120"/>
    </location>
</feature>
<organism>
    <name type="scientific">Streptococcus pyogenes serotype M6 (strain ATCC BAA-946 / MGAS10394)</name>
    <dbReference type="NCBI Taxonomy" id="286636"/>
    <lineage>
        <taxon>Bacteria</taxon>
        <taxon>Bacillati</taxon>
        <taxon>Bacillota</taxon>
        <taxon>Bacilli</taxon>
        <taxon>Lactobacillales</taxon>
        <taxon>Streptococcaceae</taxon>
        <taxon>Streptococcus</taxon>
    </lineage>
</organism>
<sequence>MTDKFDANDETRTVYAVVYDNDQPVSTGQFLAETKIEARLTRIVTLADYCGCGYGAKVTEALETYTRREGFYQLTIHSELTAQTFYENLGYQTYGSKYLEDGEYCQSLVKTILKWEKNMDIAMLIAIVGGLLGCYLYLTKNNEPKD</sequence>